<comment type="subunit">
    <text>May interact with the N-terminus of HD.</text>
</comment>
<comment type="interaction">
    <interactant intactId="EBI-6447217">
        <id>O75409</id>
    </interactant>
    <interactant intactId="EBI-1222467">
        <id>P02649</id>
        <label>APOE</label>
    </interactant>
    <organismsDiffer>false</organismsDiffer>
    <experiments>3</experiments>
</comment>
<comment type="interaction">
    <interactant intactId="EBI-6447217">
        <id>O75409</id>
    </interactant>
    <interactant intactId="EBI-946046">
        <id>P54252</id>
        <label>ATXN3</label>
    </interactant>
    <organismsDiffer>false</organismsDiffer>
    <experiments>3</experiments>
</comment>
<comment type="interaction">
    <interactant intactId="EBI-6447217">
        <id>O75409</id>
    </interactant>
    <interactant intactId="EBI-6624398">
        <id>P06307</id>
        <label>CCK</label>
    </interactant>
    <organismsDiffer>false</organismsDiffer>
    <experiments>3</experiments>
</comment>
<comment type="interaction">
    <interactant intactId="EBI-6447217">
        <id>O75409</id>
    </interactant>
    <interactant intactId="EBI-355710">
        <id>P48643</id>
        <label>CCT5</label>
    </interactant>
    <organismsDiffer>false</organismsDiffer>
    <experiments>3</experiments>
</comment>
<comment type="interaction">
    <interactant intactId="EBI-6447217">
        <id>O75409</id>
    </interactant>
    <interactant intactId="EBI-1003700">
        <id>Q9H3R5</id>
        <label>CENPH</label>
    </interactant>
    <organismsDiffer>false</organismsDiffer>
    <experiments>4</experiments>
</comment>
<comment type="interaction">
    <interactant intactId="EBI-6447217">
        <id>O75409</id>
    </interactant>
    <interactant intactId="EBI-744115">
        <id>Q9C0F1</id>
        <label>CEP44</label>
    </interactant>
    <organismsDiffer>false</organismsDiffer>
    <experiments>6</experiments>
</comment>
<comment type="interaction">
    <interactant intactId="EBI-6447217">
        <id>O75409</id>
    </interactant>
    <interactant intactId="EBI-1955541">
        <id>Q53GS7</id>
        <label>GLE1</label>
    </interactant>
    <organismsDiffer>false</organismsDiffer>
    <experiments>3</experiments>
</comment>
<comment type="interaction">
    <interactant intactId="EBI-6447217">
        <id>O75409</id>
    </interactant>
    <interactant intactId="EBI-747754">
        <id>P28799</id>
        <label>GRN</label>
    </interactant>
    <organismsDiffer>false</organismsDiffer>
    <experiments>3</experiments>
</comment>
<comment type="interaction">
    <interactant intactId="EBI-6447217">
        <id>O75409</id>
    </interactant>
    <interactant intactId="EBI-466029">
        <id>P42858</id>
        <label>HTT</label>
    </interactant>
    <organismsDiffer>false</organismsDiffer>
    <experiments>16</experiments>
</comment>
<comment type="interaction">
    <interactant intactId="EBI-6447217">
        <id>O75409</id>
    </interactant>
    <interactant intactId="EBI-21591415">
        <id>P13473-2</id>
        <label>LAMP2</label>
    </interactant>
    <organismsDiffer>false</organismsDiffer>
    <experiments>3</experiments>
</comment>
<comment type="interaction">
    <interactant intactId="EBI-6447217">
        <id>O75409</id>
    </interactant>
    <interactant intactId="EBI-751857">
        <id>O15481</id>
        <label>MAGEB4</label>
    </interactant>
    <organismsDiffer>false</organismsDiffer>
    <experiments>3</experiments>
</comment>
<comment type="interaction">
    <interactant intactId="EBI-6447217">
        <id>O75409</id>
    </interactant>
    <interactant intactId="EBI-3906629">
        <id>P15173</id>
        <label>MYOG</label>
    </interactant>
    <organismsDiffer>false</organismsDiffer>
    <experiments>6</experiments>
</comment>
<comment type="interaction">
    <interactant intactId="EBI-6447217">
        <id>O75409</id>
    </interactant>
    <interactant intactId="EBI-741158">
        <id>Q96HA8</id>
        <label>NTAQ1</label>
    </interactant>
    <organismsDiffer>false</organismsDiffer>
    <experiments>3</experiments>
</comment>
<comment type="interaction">
    <interactant intactId="EBI-6447217">
        <id>O75409</id>
    </interactant>
    <interactant intactId="EBI-2623095">
        <id>Q9Y371</id>
        <label>SH3GLB1</label>
    </interactant>
    <organismsDiffer>false</organismsDiffer>
    <experiments>3</experiments>
</comment>
<comment type="interaction">
    <interactant intactId="EBI-6447217">
        <id>O75409</id>
    </interactant>
    <interactant intactId="EBI-743675">
        <id>Q15475</id>
        <label>SIX1</label>
    </interactant>
    <organismsDiffer>false</organismsDiffer>
    <experiments>4</experiments>
</comment>
<comment type="interaction">
    <interactant intactId="EBI-6447217">
        <id>O75409</id>
    </interactant>
    <interactant intactId="EBI-720609">
        <id>O76024</id>
        <label>WFS1</label>
    </interactant>
    <organismsDiffer>false</organismsDiffer>
    <experiments>3</experiments>
</comment>
<comment type="sequence caution" evidence="2">
    <conflict type="erroneous initiation">
        <sequence resource="EMBL-CDS" id="AAC26851"/>
    </conflict>
</comment>
<accession>O75409</accession>
<accession>A1A4D3</accession>
<sequence length="117" mass="13442">MSEKKNCKNSSTNNNQTQDPSRNELQVPRSFVDRVVQDERDVQSQSSSTINTLLTLLDCLADYIMERVGLEASNNGSMRNTSQDREREVDNNREPHSAESDVTRFLFDEMPKSRKND</sequence>
<feature type="chain" id="PRO_0000254087" description="Huntingtin-interacting protein M">
    <location>
        <begin position="1"/>
        <end position="117"/>
    </location>
</feature>
<feature type="region of interest" description="Disordered" evidence="1">
    <location>
        <begin position="1"/>
        <end position="30"/>
    </location>
</feature>
<feature type="region of interest" description="Disordered" evidence="1">
    <location>
        <begin position="71"/>
        <end position="117"/>
    </location>
</feature>
<feature type="compositionally biased region" description="Polar residues" evidence="1">
    <location>
        <begin position="72"/>
        <end position="81"/>
    </location>
</feature>
<feature type="compositionally biased region" description="Basic and acidic residues" evidence="1">
    <location>
        <begin position="82"/>
        <end position="117"/>
    </location>
</feature>
<feature type="sequence variant" id="VAR_028810" description="In dbSNP:rs6651635.">
    <original>V</original>
    <variation>I</variation>
    <location>
        <position position="68"/>
    </location>
</feature>
<name>HYPM_HUMAN</name>
<organism>
    <name type="scientific">Homo sapiens</name>
    <name type="common">Human</name>
    <dbReference type="NCBI Taxonomy" id="9606"/>
    <lineage>
        <taxon>Eukaryota</taxon>
        <taxon>Metazoa</taxon>
        <taxon>Chordata</taxon>
        <taxon>Craniata</taxon>
        <taxon>Vertebrata</taxon>
        <taxon>Euteleostomi</taxon>
        <taxon>Mammalia</taxon>
        <taxon>Eutheria</taxon>
        <taxon>Euarchontoglires</taxon>
        <taxon>Primates</taxon>
        <taxon>Haplorrhini</taxon>
        <taxon>Catarrhini</taxon>
        <taxon>Hominidae</taxon>
        <taxon>Homo</taxon>
    </lineage>
</organism>
<dbReference type="EMBL" id="AF049615">
    <property type="protein sequence ID" value="AAC26851.1"/>
    <property type="status" value="ALT_INIT"/>
    <property type="molecule type" value="mRNA"/>
</dbReference>
<dbReference type="EMBL" id="CH471141">
    <property type="protein sequence ID" value="EAW59451.1"/>
    <property type="molecule type" value="Genomic_DNA"/>
</dbReference>
<dbReference type="EMBL" id="BC104428">
    <property type="protein sequence ID" value="AAI04429.1"/>
    <property type="molecule type" value="mRNA"/>
</dbReference>
<dbReference type="EMBL" id="BC104429">
    <property type="protein sequence ID" value="AAI04430.1"/>
    <property type="molecule type" value="mRNA"/>
</dbReference>
<dbReference type="EMBL" id="BC113024">
    <property type="protein sequence ID" value="AAI13025.1"/>
    <property type="molecule type" value="mRNA"/>
</dbReference>
<dbReference type="EMBL" id="BC113025">
    <property type="protein sequence ID" value="AAI13026.1"/>
    <property type="molecule type" value="mRNA"/>
</dbReference>
<dbReference type="CCDS" id="CCDS43929.1"/>
<dbReference type="RefSeq" id="NP_036406.1">
    <property type="nucleotide sequence ID" value="NM_012274.2"/>
</dbReference>
<dbReference type="SMR" id="O75409"/>
<dbReference type="BioGRID" id="117303">
    <property type="interactions" value="88"/>
</dbReference>
<dbReference type="FunCoup" id="O75409">
    <property type="interactions" value="2"/>
</dbReference>
<dbReference type="IntAct" id="O75409">
    <property type="interactions" value="90"/>
</dbReference>
<dbReference type="STRING" id="9606.ENSP00000339511"/>
<dbReference type="iPTMnet" id="O75409"/>
<dbReference type="PhosphoSitePlus" id="O75409"/>
<dbReference type="BioMuta" id="HYPM"/>
<dbReference type="MassIVE" id="O75409"/>
<dbReference type="PaxDb" id="9606-ENSP00000339511"/>
<dbReference type="PeptideAtlas" id="O75409"/>
<dbReference type="ProteomicsDB" id="49976"/>
<dbReference type="Antibodypedia" id="567">
    <property type="antibodies" value="32 antibodies from 10 providers"/>
</dbReference>
<dbReference type="DNASU" id="25763"/>
<dbReference type="Ensembl" id="ENST00000341016.5">
    <property type="protein sequence ID" value="ENSP00000339511.3"/>
    <property type="gene ID" value="ENSG00000187516.7"/>
</dbReference>
<dbReference type="GeneID" id="25763"/>
<dbReference type="KEGG" id="hsa:25763"/>
<dbReference type="MANE-Select" id="ENST00000341016.5">
    <property type="protein sequence ID" value="ENSP00000339511.3"/>
    <property type="RefSeq nucleotide sequence ID" value="NM_012274.2"/>
    <property type="RefSeq protein sequence ID" value="NP_036406.1"/>
</dbReference>
<dbReference type="UCSC" id="uc004ddt.4">
    <property type="organism name" value="human"/>
</dbReference>
<dbReference type="AGR" id="HGNC:18417"/>
<dbReference type="CTD" id="25763"/>
<dbReference type="DisGeNET" id="25763"/>
<dbReference type="GeneCards" id="H2AP"/>
<dbReference type="HGNC" id="HGNC:18417">
    <property type="gene designation" value="H2AP"/>
</dbReference>
<dbReference type="HPA" id="ENSG00000187516">
    <property type="expression patterns" value="Tissue enriched (testis)"/>
</dbReference>
<dbReference type="neXtProt" id="NX_O75409"/>
<dbReference type="OpenTargets" id="ENSG00000187516"/>
<dbReference type="VEuPathDB" id="HostDB:ENSG00000187516"/>
<dbReference type="eggNOG" id="ENOG502RU2P">
    <property type="taxonomic scope" value="Eukaryota"/>
</dbReference>
<dbReference type="GeneTree" id="ENSGT00390000015623"/>
<dbReference type="HOGENOM" id="CLU_062828_5_0_1"/>
<dbReference type="InParanoid" id="O75409"/>
<dbReference type="OMA" id="NGRMRNT"/>
<dbReference type="OrthoDB" id="9664162at2759"/>
<dbReference type="PAN-GO" id="O75409">
    <property type="GO annotations" value="1 GO annotation based on evolutionary models"/>
</dbReference>
<dbReference type="PhylomeDB" id="O75409"/>
<dbReference type="TreeFam" id="TF338397"/>
<dbReference type="PathwayCommons" id="O75409"/>
<dbReference type="SignaLink" id="O75409"/>
<dbReference type="BioGRID-ORCS" id="25763">
    <property type="hits" value="14 hits in 760 CRISPR screens"/>
</dbReference>
<dbReference type="GenomeRNAi" id="25763"/>
<dbReference type="Pharos" id="O75409">
    <property type="development level" value="Tdark"/>
</dbReference>
<dbReference type="PRO" id="PR:O75409"/>
<dbReference type="Proteomes" id="UP000005640">
    <property type="component" value="Chromosome X"/>
</dbReference>
<dbReference type="RNAct" id="O75409">
    <property type="molecule type" value="protein"/>
</dbReference>
<dbReference type="Bgee" id="ENSG00000187516">
    <property type="expression patterns" value="Expressed in male germ line stem cell (sensu Vertebrata) in testis and 47 other cell types or tissues"/>
</dbReference>
<dbReference type="GO" id="GO:0000786">
    <property type="term" value="C:nucleosome"/>
    <property type="evidence" value="ECO:0000318"/>
    <property type="project" value="GO_Central"/>
</dbReference>
<dbReference type="GO" id="GO:0005634">
    <property type="term" value="C:nucleus"/>
    <property type="evidence" value="ECO:0000318"/>
    <property type="project" value="GO_Central"/>
</dbReference>
<dbReference type="GO" id="GO:0046982">
    <property type="term" value="F:protein heterodimerization activity"/>
    <property type="evidence" value="ECO:0007669"/>
    <property type="project" value="InterPro"/>
</dbReference>
<dbReference type="GO" id="GO:0030527">
    <property type="term" value="F:structural constituent of chromatin"/>
    <property type="evidence" value="ECO:0000318"/>
    <property type="project" value="GO_Central"/>
</dbReference>
<dbReference type="GO" id="GO:0031507">
    <property type="term" value="P:heterochromatin formation"/>
    <property type="evidence" value="ECO:0000318"/>
    <property type="project" value="GO_Central"/>
</dbReference>
<dbReference type="Gene3D" id="1.10.20.10">
    <property type="entry name" value="Histone, subunit A"/>
    <property type="match status" value="1"/>
</dbReference>
<dbReference type="InterPro" id="IPR009072">
    <property type="entry name" value="Histone-fold"/>
</dbReference>
<dbReference type="SUPFAM" id="SSF47113">
    <property type="entry name" value="Histone-fold"/>
    <property type="match status" value="1"/>
</dbReference>
<gene>
    <name evidence="3" type="primary">H2AP</name>
    <name evidence="3" type="synonym">CXorf27</name>
    <name evidence="3" type="synonym">HYPM</name>
</gene>
<keyword id="KW-1267">Proteomics identification</keyword>
<keyword id="KW-1185">Reference proteome</keyword>
<reference key="1">
    <citation type="journal article" date="1998" name="Hum. Mol. Genet.">
        <title>Huntingtin interacts with a family of WW domain proteins.</title>
        <authorList>
            <person name="Faber P.W."/>
            <person name="Barnes G.T."/>
            <person name="Srinidhi J."/>
            <person name="Chen J."/>
            <person name="Gusella J.F."/>
            <person name="MacDonald M.E."/>
        </authorList>
    </citation>
    <scope>NUCLEOTIDE SEQUENCE [MRNA]</scope>
    <scope>POSSIBLE INTERACTION WITH HD</scope>
    <source>
        <tissue>Testis</tissue>
    </source>
</reference>
<reference key="2">
    <citation type="submission" date="2005-09" db="EMBL/GenBank/DDBJ databases">
        <authorList>
            <person name="Mural R.J."/>
            <person name="Istrail S."/>
            <person name="Sutton G.G."/>
            <person name="Florea L."/>
            <person name="Halpern A.L."/>
            <person name="Mobarry C.M."/>
            <person name="Lippert R."/>
            <person name="Walenz B."/>
            <person name="Shatkay H."/>
            <person name="Dew I."/>
            <person name="Miller J.R."/>
            <person name="Flanigan M.J."/>
            <person name="Edwards N.J."/>
            <person name="Bolanos R."/>
            <person name="Fasulo D."/>
            <person name="Halldorsson B.V."/>
            <person name="Hannenhalli S."/>
            <person name="Turner R."/>
            <person name="Yooseph S."/>
            <person name="Lu F."/>
            <person name="Nusskern D.R."/>
            <person name="Shue B.C."/>
            <person name="Zheng X.H."/>
            <person name="Zhong F."/>
            <person name="Delcher A.L."/>
            <person name="Huson D.H."/>
            <person name="Kravitz S.A."/>
            <person name="Mouchard L."/>
            <person name="Reinert K."/>
            <person name="Remington K.A."/>
            <person name="Clark A.G."/>
            <person name="Waterman M.S."/>
            <person name="Eichler E.E."/>
            <person name="Adams M.D."/>
            <person name="Hunkapiller M.W."/>
            <person name="Myers E.W."/>
            <person name="Venter J.C."/>
        </authorList>
    </citation>
    <scope>NUCLEOTIDE SEQUENCE [LARGE SCALE GENOMIC DNA]</scope>
</reference>
<reference key="3">
    <citation type="journal article" date="2004" name="Genome Res.">
        <title>The status, quality, and expansion of the NIH full-length cDNA project: the Mammalian Gene Collection (MGC).</title>
        <authorList>
            <consortium name="The MGC Project Team"/>
        </authorList>
    </citation>
    <scope>NUCLEOTIDE SEQUENCE [LARGE SCALE MRNA]</scope>
</reference>
<protein>
    <recommendedName>
        <fullName evidence="2">Huntingtin-interacting protein M</fullName>
    </recommendedName>
    <alternativeName>
        <fullName evidence="3">Histone H2A.P</fullName>
    </alternativeName>
    <alternativeName>
        <fullName>Huntingtin yeast partner M</fullName>
    </alternativeName>
</protein>
<proteinExistence type="evidence at protein level"/>
<evidence type="ECO:0000256" key="1">
    <source>
        <dbReference type="SAM" id="MobiDB-lite"/>
    </source>
</evidence>
<evidence type="ECO:0000305" key="2"/>
<evidence type="ECO:0000312" key="3">
    <source>
        <dbReference type="HGNC" id="HGNC:18417"/>
    </source>
</evidence>